<accession>Q8ZV07</accession>
<feature type="chain" id="PRO_0000112826" description="Putative [LysW]-aminoadipate semialdehyde/glutamate semialdehyde transaminase">
    <location>
        <begin position="1"/>
        <end position="383"/>
    </location>
</feature>
<feature type="binding site" evidence="1">
    <location>
        <begin position="97"/>
        <end position="98"/>
    </location>
    <ligand>
        <name>pyridoxal 5'-phosphate</name>
        <dbReference type="ChEBI" id="CHEBI:597326"/>
    </ligand>
</feature>
<feature type="binding site" evidence="1">
    <location>
        <position position="124"/>
    </location>
    <ligand>
        <name>pyridoxal 5'-phosphate</name>
        <dbReference type="ChEBI" id="CHEBI:597326"/>
    </ligand>
</feature>
<feature type="binding site" evidence="1">
    <location>
        <position position="127"/>
    </location>
    <ligand>
        <name>substrate</name>
    </ligand>
</feature>
<feature type="binding site" evidence="1">
    <location>
        <begin position="209"/>
        <end position="212"/>
    </location>
    <ligand>
        <name>pyridoxal 5'-phosphate</name>
        <dbReference type="ChEBI" id="CHEBI:597326"/>
    </ligand>
</feature>
<feature type="binding site" evidence="1">
    <location>
        <position position="266"/>
    </location>
    <ligand>
        <name>substrate</name>
    </ligand>
</feature>
<feature type="binding site" evidence="1">
    <location>
        <position position="267"/>
    </location>
    <ligand>
        <name>pyridoxal 5'-phosphate</name>
        <dbReference type="ChEBI" id="CHEBI:597326"/>
    </ligand>
</feature>
<feature type="modified residue" description="N6-(pyridoxal phosphate)lysine" evidence="1">
    <location>
        <position position="238"/>
    </location>
</feature>
<proteinExistence type="inferred from homology"/>
<organism>
    <name type="scientific">Pyrobaculum aerophilum (strain ATCC 51768 / DSM 7523 / JCM 9630 / CIP 104966 / NBRC 100827 / IM2)</name>
    <dbReference type="NCBI Taxonomy" id="178306"/>
    <lineage>
        <taxon>Archaea</taxon>
        <taxon>Thermoproteota</taxon>
        <taxon>Thermoprotei</taxon>
        <taxon>Thermoproteales</taxon>
        <taxon>Thermoproteaceae</taxon>
        <taxon>Pyrobaculum</taxon>
    </lineage>
</organism>
<evidence type="ECO:0000255" key="1">
    <source>
        <dbReference type="HAMAP-Rule" id="MF_02084"/>
    </source>
</evidence>
<reference key="1">
    <citation type="journal article" date="2002" name="Proc. Natl. Acad. Sci. U.S.A.">
        <title>Genome sequence of the hyperthermophilic crenarchaeon Pyrobaculum aerophilum.</title>
        <authorList>
            <person name="Fitz-Gibbon S.T."/>
            <person name="Ladner H."/>
            <person name="Kim U.-J."/>
            <person name="Stetter K.O."/>
            <person name="Simon M.I."/>
            <person name="Miller J.H."/>
        </authorList>
    </citation>
    <scope>NUCLEOTIDE SEQUENCE [LARGE SCALE GENOMIC DNA]</scope>
    <source>
        <strain>ATCC 51768 / DSM 7523 / JCM 9630 / CIP 104966 / NBRC 100827 / IM2</strain>
    </source>
</reference>
<name>LYSJ_PYRAE</name>
<comment type="function">
    <text evidence="1">Involved in both the arginine and lysine biosynthetic pathways.</text>
</comment>
<comment type="catalytic activity">
    <reaction evidence="1">
        <text>[amino-group carrier protein]-C-terminal-gamma-(L-lysyl)-L-glutamate + 2-oxoglutarate = [amino-group carrier protein]-C-terminal-N-(1-carboxy-5-oxopentan-1-yl)-L-glutamine + L-glutamate</text>
        <dbReference type="Rhea" id="RHEA:41952"/>
        <dbReference type="Rhea" id="RHEA-COMP:9714"/>
        <dbReference type="Rhea" id="RHEA-COMP:9715"/>
        <dbReference type="ChEBI" id="CHEBI:16810"/>
        <dbReference type="ChEBI" id="CHEBI:29985"/>
        <dbReference type="ChEBI" id="CHEBI:78501"/>
        <dbReference type="ChEBI" id="CHEBI:78526"/>
        <dbReference type="EC" id="2.6.1.118"/>
    </reaction>
</comment>
<comment type="catalytic activity">
    <reaction evidence="1">
        <text>[amino-group carrier protein]-C-terminal-gamma-(L-ornithyl)-L-glutamate + 2-oxoglutarate = [amino-group carrier protein]-C-terminal-gamma-(L-glutamyl-5-semialdehyde)-L-glutamate + L-glutamate</text>
        <dbReference type="Rhea" id="RHEA:52672"/>
        <dbReference type="Rhea" id="RHEA-COMP:13327"/>
        <dbReference type="Rhea" id="RHEA-COMP:13328"/>
        <dbReference type="ChEBI" id="CHEBI:16810"/>
        <dbReference type="ChEBI" id="CHEBI:29985"/>
        <dbReference type="ChEBI" id="CHEBI:136761"/>
        <dbReference type="ChEBI" id="CHEBI:136763"/>
        <dbReference type="EC" id="2.6.1.124"/>
    </reaction>
</comment>
<comment type="cofactor">
    <cofactor evidence="1">
        <name>pyridoxal 5'-phosphate</name>
        <dbReference type="ChEBI" id="CHEBI:597326"/>
    </cofactor>
    <text evidence="1">Binds 1 pyridoxal phosphate per subunit.</text>
</comment>
<comment type="pathway">
    <text evidence="1">Amino-acid biosynthesis; L-lysine biosynthesis via AAA pathway; L-lysine from L-alpha-aminoadipate (Thermus route): step 4/5.</text>
</comment>
<comment type="pathway">
    <text evidence="1">Amino-acid biosynthesis; L-arginine biosynthesis.</text>
</comment>
<comment type="subunit">
    <text evidence="1">Homodimer.</text>
</comment>
<comment type="subcellular location">
    <subcellularLocation>
        <location evidence="1">Cytoplasm</location>
    </subcellularLocation>
</comment>
<comment type="similarity">
    <text evidence="1">Belongs to the class-III pyridoxal-phosphate-dependent aminotransferase family. LysJ subfamily.</text>
</comment>
<keyword id="KW-0028">Amino-acid biosynthesis</keyword>
<keyword id="KW-0032">Aminotransferase</keyword>
<keyword id="KW-0055">Arginine biosynthesis</keyword>
<keyword id="KW-0963">Cytoplasm</keyword>
<keyword id="KW-0457">Lysine biosynthesis</keyword>
<keyword id="KW-0663">Pyridoxal phosphate</keyword>
<keyword id="KW-1185">Reference proteome</keyword>
<keyword id="KW-0808">Transferase</keyword>
<dbReference type="EC" id="2.6.1.118" evidence="1"/>
<dbReference type="EC" id="2.6.1.124" evidence="1"/>
<dbReference type="EMBL" id="AE009441">
    <property type="protein sequence ID" value="AAL64249.1"/>
    <property type="molecule type" value="Genomic_DNA"/>
</dbReference>
<dbReference type="RefSeq" id="WP_011008717.1">
    <property type="nucleotide sequence ID" value="NC_003364.1"/>
</dbReference>
<dbReference type="SMR" id="Q8ZV07"/>
<dbReference type="FunCoup" id="Q8ZV07">
    <property type="interactions" value="207"/>
</dbReference>
<dbReference type="STRING" id="178306.PAE2515"/>
<dbReference type="EnsemblBacteria" id="AAL64249">
    <property type="protein sequence ID" value="AAL64249"/>
    <property type="gene ID" value="PAE2515"/>
</dbReference>
<dbReference type="GeneID" id="1464590"/>
<dbReference type="KEGG" id="pai:PAE2515"/>
<dbReference type="PATRIC" id="fig|178306.9.peg.1874"/>
<dbReference type="eggNOG" id="arCOG00914">
    <property type="taxonomic scope" value="Archaea"/>
</dbReference>
<dbReference type="HOGENOM" id="CLU_016922_10_0_2"/>
<dbReference type="InParanoid" id="Q8ZV07"/>
<dbReference type="UniPathway" id="UPA00033">
    <property type="reaction ID" value="UER00038"/>
</dbReference>
<dbReference type="UniPathway" id="UPA00068"/>
<dbReference type="Proteomes" id="UP000002439">
    <property type="component" value="Chromosome"/>
</dbReference>
<dbReference type="GO" id="GO:0005737">
    <property type="term" value="C:cytoplasm"/>
    <property type="evidence" value="ECO:0007669"/>
    <property type="project" value="UniProtKB-SubCell"/>
</dbReference>
<dbReference type="GO" id="GO:0042802">
    <property type="term" value="F:identical protein binding"/>
    <property type="evidence" value="ECO:0000318"/>
    <property type="project" value="GO_Central"/>
</dbReference>
<dbReference type="GO" id="GO:0030170">
    <property type="term" value="F:pyridoxal phosphate binding"/>
    <property type="evidence" value="ECO:0000318"/>
    <property type="project" value="GO_Central"/>
</dbReference>
<dbReference type="GO" id="GO:0008483">
    <property type="term" value="F:transaminase activity"/>
    <property type="evidence" value="ECO:0007669"/>
    <property type="project" value="UniProtKB-UniRule"/>
</dbReference>
<dbReference type="GO" id="GO:0042450">
    <property type="term" value="P:arginine biosynthetic process via ornithine"/>
    <property type="evidence" value="ECO:0007669"/>
    <property type="project" value="UniProtKB-UniRule"/>
</dbReference>
<dbReference type="GO" id="GO:0006526">
    <property type="term" value="P:L-arginine biosynthetic process"/>
    <property type="evidence" value="ECO:0007669"/>
    <property type="project" value="UniProtKB-UniPathway"/>
</dbReference>
<dbReference type="GO" id="GO:0019878">
    <property type="term" value="P:lysine biosynthetic process via aminoadipic acid"/>
    <property type="evidence" value="ECO:0007669"/>
    <property type="project" value="UniProtKB-UniRule"/>
</dbReference>
<dbReference type="CDD" id="cd00610">
    <property type="entry name" value="OAT_like"/>
    <property type="match status" value="1"/>
</dbReference>
<dbReference type="FunFam" id="3.40.640.10:FF:000004">
    <property type="entry name" value="Acetylornithine aminotransferase"/>
    <property type="match status" value="1"/>
</dbReference>
<dbReference type="Gene3D" id="3.90.1150.10">
    <property type="entry name" value="Aspartate Aminotransferase, domain 1"/>
    <property type="match status" value="1"/>
</dbReference>
<dbReference type="Gene3D" id="3.40.640.10">
    <property type="entry name" value="Type I PLP-dependent aspartate aminotransferase-like (Major domain)"/>
    <property type="match status" value="1"/>
</dbReference>
<dbReference type="HAMAP" id="MF_02084">
    <property type="entry name" value="LysJ_aminotrans_3"/>
    <property type="match status" value="1"/>
</dbReference>
<dbReference type="InterPro" id="IPR005814">
    <property type="entry name" value="Aminotrans_3"/>
</dbReference>
<dbReference type="InterPro" id="IPR049704">
    <property type="entry name" value="Aminotrans_3_PPA_site"/>
</dbReference>
<dbReference type="InterPro" id="IPR050103">
    <property type="entry name" value="Class-III_PLP-dep_AT"/>
</dbReference>
<dbReference type="InterPro" id="IPR037537">
    <property type="entry name" value="LysJ"/>
</dbReference>
<dbReference type="InterPro" id="IPR015424">
    <property type="entry name" value="PyrdxlP-dep_Trfase"/>
</dbReference>
<dbReference type="InterPro" id="IPR015421">
    <property type="entry name" value="PyrdxlP-dep_Trfase_major"/>
</dbReference>
<dbReference type="InterPro" id="IPR015422">
    <property type="entry name" value="PyrdxlP-dep_Trfase_small"/>
</dbReference>
<dbReference type="PANTHER" id="PTHR11986:SF79">
    <property type="entry name" value="ACETYLORNITHINE AMINOTRANSFERASE, MITOCHONDRIAL"/>
    <property type="match status" value="1"/>
</dbReference>
<dbReference type="PANTHER" id="PTHR11986">
    <property type="entry name" value="AMINOTRANSFERASE CLASS III"/>
    <property type="match status" value="1"/>
</dbReference>
<dbReference type="Pfam" id="PF00202">
    <property type="entry name" value="Aminotran_3"/>
    <property type="match status" value="1"/>
</dbReference>
<dbReference type="PIRSF" id="PIRSF000521">
    <property type="entry name" value="Transaminase_4ab_Lys_Orn"/>
    <property type="match status" value="1"/>
</dbReference>
<dbReference type="SUPFAM" id="SSF53383">
    <property type="entry name" value="PLP-dependent transferases"/>
    <property type="match status" value="1"/>
</dbReference>
<dbReference type="PROSITE" id="PS00600">
    <property type="entry name" value="AA_TRANSFER_CLASS_3"/>
    <property type="match status" value="1"/>
</dbReference>
<gene>
    <name evidence="1" type="primary">lysJ</name>
    <name type="ordered locus">PAE2515</name>
</gene>
<sequence>MGRIAKYYREYGIRIVKGFMQYVWDDKGQRYIDCNTNHGVVFLGHANPKIVEAVKKQVEEIWAVPLNFATPARERFIEEFSKLLPPKFGVVFLQNTGTEAVEVAIKIAKKVTRKPTIVAFTNSFHGRTMGSLSITWNEKYKKAFEPLYPHVRFGKFNVPHEVDKLIGEDTCCVVVEPIQGEGGVNPATPEFLKALREEAQRKGALLIFDEVQTGFGRTGAVWAFQKYGVEPDIFTAGKPVAGGLPIGLAVAREDFGDVFEPGEHGSTFAGNAVVMAAAAAASRLLREEDVPGRAERIGAELAKALGDTGSRLAVRVKGMGLMLGLELRVKADQFIQPLLERGVMALTAGVNTLRFLPPYMISKEDVEVVHAAVTEVLKKAEQQ</sequence>
<protein>
    <recommendedName>
        <fullName evidence="1">Putative [LysW]-aminoadipate semialdehyde/glutamate semialdehyde transaminase</fullName>
        <ecNumber evidence="1">2.6.1.118</ecNumber>
        <ecNumber evidence="1">2.6.1.124</ecNumber>
    </recommendedName>
</protein>